<feature type="chain" id="PRO_0000454574" description="Thioesterase frbE">
    <location>
        <begin position="1"/>
        <end position="257"/>
    </location>
</feature>
<gene>
    <name evidence="4" type="primary">frbE</name>
    <name type="ORF">ANO11243_029890</name>
</gene>
<sequence>MSLPNPFLIRPAPKKGKKGAPLVLLHDGGGTIFSYLQLGALGRDVYGIHNTRPGPTGVWEGGIAQMAAEYLDLIKTVVPSGPIIIGGWSLGGLVSFEMARQMAASAGSSSSSEQLQVLGLIMIDSRHPSTFTDKELVLPDSIKPAIRESIQHNMTQSRQLIRDYSTPSWPQGSQPPPTMFLRATRDLDGVPLPIQADAASSTRNGRMEGWREYEHDFIREVVEVEGTHFSIFEDQNIGELDKKLLAACKTLDRGVKS</sequence>
<protein>
    <recommendedName>
        <fullName evidence="4">Thioesterase frbE</fullName>
        <ecNumber evidence="6">3.1.-.-</ecNumber>
    </recommendedName>
    <alternativeName>
        <fullName evidence="4">FR901469 biosynthesis cluster protein E</fullName>
    </alternativeName>
</protein>
<comment type="function">
    <text evidence="3 6">Thioesterase; part of the gene cluster that mediates the biosynthesis of the antifungal antibiotic FR901469, an inhibitor of beta-1,3-glucansynthase, exerting antifungal activity against the pathogenes Candida albicans and Aspergillus fumigatus (PubMed:27660098). FR901469 is a cyclic depsipeptide containing 12 amino acid residues and a fatty acid chain (PubMed:27660098). The NRPS frbI contains 12 modules responsible for the formation of the depsipeptide backbone which is denoted as Acyl-Thr-Ala-Tyr-Val-4OHPro-Thr-Thr-3OHPro-threo3OHGln-Gly-Thr-Orn-OH (C71H116N14O23) (Probable). The PKS frbB is probably involved in the production of the hydrocarbon chain, and the acyl-CoA ligase frbC might be involved in the transport of the chain to the peptide ptoduct of frbI (Probable). Because FR901469 contains 3 hydroxylated amino acid residues, the 3 oxygenases frbA, frbH, and frbJ might be participating in amino acid hydroxylation (Probable). As no thioesterase domains were detected in frbI or frbB, the thioesterases frbD and frbE may instead release and cyclize the products of the NRPS and PKS, respectively (Probable).</text>
</comment>
<comment type="pathway">
    <text evidence="6">Antifungal biosynthesis.</text>
</comment>
<comment type="biotechnology">
    <text evidence="1 2">FR901469 inhibits the activity of 1,3-beta-glucan synthase from Candida albicans and Aspergillus fumigatus (PubMed:11099224, PubMed:11099225). With minimal inhibitory concentrations (MICs) against Candida albicans and Aspergillus fumigatus of 0.63 ug/ml and 0.16 ug/ml, repectively, FR901469 displays greater inhibitory activity than other 1,3-beta-glucan synthase inhibitors such as, WF11899A, echinocandin B, aculeacin A, and papulacandin B (PubMed:11099224, PubMed:11099225).</text>
</comment>
<comment type="similarity">
    <text evidence="5">Belongs to the AMT4 thioesterase family.</text>
</comment>
<reference key="1">
    <citation type="journal article" date="2015" name="Genome Announc.">
        <title>Genome sequence of fungal species No.11243, which produces the antifungal antibiotic FR901469.</title>
        <authorList>
            <person name="Matsui M."/>
            <person name="Yokoyama T."/>
            <person name="Nemoto K."/>
            <person name="Kumagai T."/>
            <person name="Terai G."/>
            <person name="Arita M."/>
            <person name="Machida M."/>
            <person name="Shibata T."/>
        </authorList>
    </citation>
    <scope>NUCLEOTIDE SEQUENCE [LARGE SCALE GENOMIC DNA]</scope>
</reference>
<reference key="2">
    <citation type="journal article" date="2000" name="J. Antibiot.">
        <title>FR901469, a novel antifungal antibiotic from an unidentified fungus No.11243. I. Taxonomy, fermentation, isolation, physico-chemical properties and biological properties.</title>
        <authorList>
            <person name="Fujie A."/>
            <person name="Iwamoto T."/>
            <person name="Muramatsu H."/>
            <person name="Okudaira T."/>
            <person name="Nitta K."/>
            <person name="Nakanishi T."/>
            <person name="Sakamoto K."/>
            <person name="Hori Y."/>
            <person name="Hino M."/>
            <person name="Hashimoto S."/>
            <person name="Okuhara M."/>
        </authorList>
    </citation>
    <scope>BIOTECHNOLOGY</scope>
</reference>
<reference key="3">
    <citation type="journal article" date="2000" name="J. Antibiot.">
        <title>FR901469, a novel antifungal antibiotic from an unidentified fungus No.11243. II. In vitro and in vivo activities.</title>
        <authorList>
            <person name="Fujie A."/>
            <person name="Iwamoto T."/>
            <person name="Muramatsu H."/>
            <person name="Okudaira T."/>
            <person name="Sato I."/>
            <person name="Furuta T."/>
            <person name="Tsurumi Y."/>
            <person name="Hori Y."/>
            <person name="Hino M."/>
            <person name="Hashimoto S."/>
            <person name="Okuhara M."/>
        </authorList>
    </citation>
    <scope>BIOTECHNOLOGY</scope>
</reference>
<reference key="4">
    <citation type="journal article" date="2017" name="J. Biosci. Bioeng.">
        <title>Identification of a putative FR901469 biosynthesis gene cluster in fungal sp. No. 11243 and enhancement of the productivity by overexpressing the transcription factor gene frbF.</title>
        <authorList>
            <person name="Matsui M."/>
            <person name="Yokoyama T."/>
            <person name="Nemoto K."/>
            <person name="Kumagai T."/>
            <person name="Terai G."/>
            <person name="Tamano K."/>
            <person name="Machida M."/>
            <person name="Shibata T."/>
        </authorList>
    </citation>
    <scope>FUNCTION</scope>
    <scope>PATHWAY</scope>
</reference>
<evidence type="ECO:0000269" key="1">
    <source>
    </source>
</evidence>
<evidence type="ECO:0000269" key="2">
    <source>
    </source>
</evidence>
<evidence type="ECO:0000269" key="3">
    <source>
    </source>
</evidence>
<evidence type="ECO:0000303" key="4">
    <source>
    </source>
</evidence>
<evidence type="ECO:0000305" key="5"/>
<evidence type="ECO:0000305" key="6">
    <source>
    </source>
</evidence>
<accession>A0A0S6XGG5</accession>
<name>FRBE_DOTX1</name>
<keyword id="KW-0378">Hydrolase</keyword>
<keyword id="KW-1185">Reference proteome</keyword>
<organism>
    <name type="scientific">Dothideomycetidae sp. (strain 11243)</name>
    <name type="common">Fungal sp. (strain No.11243)</name>
    <dbReference type="NCBI Taxonomy" id="1603295"/>
    <lineage>
        <taxon>Eukaryota</taxon>
        <taxon>Fungi</taxon>
        <taxon>Dikarya</taxon>
        <taxon>Ascomycota</taxon>
        <taxon>Pezizomycotina</taxon>
        <taxon>Dothideomycetes</taxon>
        <taxon>Dothideomycetidae</taxon>
    </lineage>
</organism>
<proteinExistence type="evidence at protein level"/>
<dbReference type="EC" id="3.1.-.-" evidence="6"/>
<dbReference type="EMBL" id="DF938583">
    <property type="protein sequence ID" value="GAM84986.1"/>
    <property type="molecule type" value="Genomic_DNA"/>
</dbReference>
<dbReference type="SMR" id="A0A0S6XGG5"/>
<dbReference type="STRING" id="1603295.A0A0S6XGG5"/>
<dbReference type="ESTHER" id="blob1-frbe">
    <property type="family name" value="Thioesterase"/>
</dbReference>
<dbReference type="OrthoDB" id="10253869at2759"/>
<dbReference type="Proteomes" id="UP000054361">
    <property type="component" value="Unassembled WGS sequence"/>
</dbReference>
<dbReference type="GO" id="GO:0016787">
    <property type="term" value="F:hydrolase activity"/>
    <property type="evidence" value="ECO:0007669"/>
    <property type="project" value="UniProtKB-KW"/>
</dbReference>
<dbReference type="GO" id="GO:0009058">
    <property type="term" value="P:biosynthetic process"/>
    <property type="evidence" value="ECO:0007669"/>
    <property type="project" value="InterPro"/>
</dbReference>
<dbReference type="Gene3D" id="3.40.50.1820">
    <property type="entry name" value="alpha/beta hydrolase"/>
    <property type="match status" value="1"/>
</dbReference>
<dbReference type="InterPro" id="IPR029058">
    <property type="entry name" value="AB_hydrolase_fold"/>
</dbReference>
<dbReference type="InterPro" id="IPR001031">
    <property type="entry name" value="Thioesterase"/>
</dbReference>
<dbReference type="Pfam" id="PF00975">
    <property type="entry name" value="Thioesterase"/>
    <property type="match status" value="1"/>
</dbReference>
<dbReference type="SUPFAM" id="SSF53474">
    <property type="entry name" value="alpha/beta-Hydrolases"/>
    <property type="match status" value="1"/>
</dbReference>